<comment type="function">
    <text evidence="1">Part of the ABC transporter complex LolCDE involved in the translocation of mature outer membrane-directed lipoproteins, from the inner membrane to the periplasmic chaperone, LolA. Responsible for the formation of the LolA-lipoprotein complex in an ATP-dependent manner.</text>
</comment>
<comment type="subunit">
    <text evidence="1">The complex is composed of two ATP-binding proteins (LolD) and two transmembrane proteins (LolC and LolE).</text>
</comment>
<comment type="subcellular location">
    <subcellularLocation>
        <location evidence="1">Cell inner membrane</location>
        <topology evidence="1">Peripheral membrane protein</topology>
    </subcellularLocation>
</comment>
<comment type="similarity">
    <text evidence="1">Belongs to the ABC transporter superfamily. Lipoprotein translocase (TC 3.A.1.125) family.</text>
</comment>
<evidence type="ECO:0000255" key="1">
    <source>
        <dbReference type="HAMAP-Rule" id="MF_01708"/>
    </source>
</evidence>
<proteinExistence type="inferred from homology"/>
<sequence length="233" mass="25479">MNKILLQCDNLCKRYQEGTVQTDVLHDVSFSIGEGEMMAIVGSSGSGKSTLLHLLGGLDTPTSGDVIFSGQPMSKLSSAAKAELRNQKLGFIYQFHHLLPDFTALENVAMPLLIGKKKPAEIDARAREMLHAVGLEHRATHRPSELSGGERQRVAIARALVNNPRLVLADEPTGNLDARNADSIFELLGELNRLQGTAFLVVTHDLQLAKRMSRQLEMRDGRLTAELSLMGAE</sequence>
<dbReference type="EC" id="7.6.2.-" evidence="1"/>
<dbReference type="EMBL" id="AL513382">
    <property type="protein sequence ID" value="CAD08342.1"/>
    <property type="molecule type" value="Genomic_DNA"/>
</dbReference>
<dbReference type="EMBL" id="AE014613">
    <property type="protein sequence ID" value="AAO69327.1"/>
    <property type="molecule type" value="Genomic_DNA"/>
</dbReference>
<dbReference type="RefSeq" id="NP_455710.1">
    <property type="nucleotide sequence ID" value="NC_003198.1"/>
</dbReference>
<dbReference type="RefSeq" id="WP_001033714.1">
    <property type="nucleotide sequence ID" value="NZ_WSUR01000030.1"/>
</dbReference>
<dbReference type="SMR" id="P61481"/>
<dbReference type="STRING" id="220341.gene:17585222"/>
<dbReference type="KEGG" id="stt:t1702"/>
<dbReference type="KEGG" id="sty:STY1258"/>
<dbReference type="PATRIC" id="fig|220341.7.peg.1262"/>
<dbReference type="eggNOG" id="COG1136">
    <property type="taxonomic scope" value="Bacteria"/>
</dbReference>
<dbReference type="HOGENOM" id="CLU_000604_1_22_6"/>
<dbReference type="OMA" id="DHHTAQG"/>
<dbReference type="OrthoDB" id="9801477at2"/>
<dbReference type="Proteomes" id="UP000000541">
    <property type="component" value="Chromosome"/>
</dbReference>
<dbReference type="Proteomes" id="UP000002670">
    <property type="component" value="Chromosome"/>
</dbReference>
<dbReference type="GO" id="GO:0005886">
    <property type="term" value="C:plasma membrane"/>
    <property type="evidence" value="ECO:0007669"/>
    <property type="project" value="UniProtKB-SubCell"/>
</dbReference>
<dbReference type="GO" id="GO:0005524">
    <property type="term" value="F:ATP binding"/>
    <property type="evidence" value="ECO:0007669"/>
    <property type="project" value="UniProtKB-KW"/>
</dbReference>
<dbReference type="GO" id="GO:0016887">
    <property type="term" value="F:ATP hydrolysis activity"/>
    <property type="evidence" value="ECO:0007669"/>
    <property type="project" value="InterPro"/>
</dbReference>
<dbReference type="GO" id="GO:0022857">
    <property type="term" value="F:transmembrane transporter activity"/>
    <property type="evidence" value="ECO:0007669"/>
    <property type="project" value="TreeGrafter"/>
</dbReference>
<dbReference type="GO" id="GO:0044874">
    <property type="term" value="P:lipoprotein localization to outer membrane"/>
    <property type="evidence" value="ECO:0007669"/>
    <property type="project" value="TreeGrafter"/>
</dbReference>
<dbReference type="GO" id="GO:0089705">
    <property type="term" value="P:protein localization to outer membrane"/>
    <property type="evidence" value="ECO:0007669"/>
    <property type="project" value="TreeGrafter"/>
</dbReference>
<dbReference type="CDD" id="cd03255">
    <property type="entry name" value="ABC_MJ0796_LolCDE_FtsE"/>
    <property type="match status" value="1"/>
</dbReference>
<dbReference type="FunFam" id="3.40.50.300:FF:000230">
    <property type="entry name" value="Lipoprotein-releasing system ATP-binding protein LolD"/>
    <property type="match status" value="1"/>
</dbReference>
<dbReference type="Gene3D" id="3.40.50.300">
    <property type="entry name" value="P-loop containing nucleotide triphosphate hydrolases"/>
    <property type="match status" value="1"/>
</dbReference>
<dbReference type="InterPro" id="IPR003593">
    <property type="entry name" value="AAA+_ATPase"/>
</dbReference>
<dbReference type="InterPro" id="IPR003439">
    <property type="entry name" value="ABC_transporter-like_ATP-bd"/>
</dbReference>
<dbReference type="InterPro" id="IPR017871">
    <property type="entry name" value="ABC_transporter-like_CS"/>
</dbReference>
<dbReference type="InterPro" id="IPR015854">
    <property type="entry name" value="ABC_transpr_LolD-like"/>
</dbReference>
<dbReference type="InterPro" id="IPR011924">
    <property type="entry name" value="LolD_lipo_ATP-bd"/>
</dbReference>
<dbReference type="InterPro" id="IPR017911">
    <property type="entry name" value="MacB-like_ATP-bd"/>
</dbReference>
<dbReference type="InterPro" id="IPR027417">
    <property type="entry name" value="P-loop_NTPase"/>
</dbReference>
<dbReference type="NCBIfam" id="TIGR02211">
    <property type="entry name" value="LolD_lipo_ex"/>
    <property type="match status" value="1"/>
</dbReference>
<dbReference type="NCBIfam" id="NF008639">
    <property type="entry name" value="PRK11629.1"/>
    <property type="match status" value="1"/>
</dbReference>
<dbReference type="PANTHER" id="PTHR24220">
    <property type="entry name" value="IMPORT ATP-BINDING PROTEIN"/>
    <property type="match status" value="1"/>
</dbReference>
<dbReference type="PANTHER" id="PTHR24220:SF689">
    <property type="entry name" value="LIPOPROTEIN-RELEASING SYSTEM ATP-BINDING PROTEIN LOLD"/>
    <property type="match status" value="1"/>
</dbReference>
<dbReference type="Pfam" id="PF00005">
    <property type="entry name" value="ABC_tran"/>
    <property type="match status" value="1"/>
</dbReference>
<dbReference type="SMART" id="SM00382">
    <property type="entry name" value="AAA"/>
    <property type="match status" value="1"/>
</dbReference>
<dbReference type="SUPFAM" id="SSF52540">
    <property type="entry name" value="P-loop containing nucleoside triphosphate hydrolases"/>
    <property type="match status" value="1"/>
</dbReference>
<dbReference type="PROSITE" id="PS00211">
    <property type="entry name" value="ABC_TRANSPORTER_1"/>
    <property type="match status" value="1"/>
</dbReference>
<dbReference type="PROSITE" id="PS50893">
    <property type="entry name" value="ABC_TRANSPORTER_2"/>
    <property type="match status" value="1"/>
</dbReference>
<dbReference type="PROSITE" id="PS51244">
    <property type="entry name" value="LOLD"/>
    <property type="match status" value="1"/>
</dbReference>
<gene>
    <name evidence="1" type="primary">lolD</name>
    <name type="ordered locus">STY1258</name>
    <name type="ordered locus">t1702</name>
</gene>
<name>LOLD_SALTI</name>
<accession>P61481</accession>
<accession>Q8XGH3</accession>
<keyword id="KW-0067">ATP-binding</keyword>
<keyword id="KW-0997">Cell inner membrane</keyword>
<keyword id="KW-1003">Cell membrane</keyword>
<keyword id="KW-0472">Membrane</keyword>
<keyword id="KW-0547">Nucleotide-binding</keyword>
<keyword id="KW-1278">Translocase</keyword>
<keyword id="KW-0813">Transport</keyword>
<organism>
    <name type="scientific">Salmonella typhi</name>
    <dbReference type="NCBI Taxonomy" id="90370"/>
    <lineage>
        <taxon>Bacteria</taxon>
        <taxon>Pseudomonadati</taxon>
        <taxon>Pseudomonadota</taxon>
        <taxon>Gammaproteobacteria</taxon>
        <taxon>Enterobacterales</taxon>
        <taxon>Enterobacteriaceae</taxon>
        <taxon>Salmonella</taxon>
    </lineage>
</organism>
<feature type="chain" id="PRO_0000092458" description="Lipoprotein-releasing system ATP-binding protein LolD">
    <location>
        <begin position="1"/>
        <end position="233"/>
    </location>
</feature>
<feature type="domain" description="ABC transporter" evidence="1">
    <location>
        <begin position="6"/>
        <end position="233"/>
    </location>
</feature>
<feature type="binding site" evidence="1">
    <location>
        <begin position="42"/>
        <end position="49"/>
    </location>
    <ligand>
        <name>ATP</name>
        <dbReference type="ChEBI" id="CHEBI:30616"/>
    </ligand>
</feature>
<protein>
    <recommendedName>
        <fullName evidence="1">Lipoprotein-releasing system ATP-binding protein LolD</fullName>
        <ecNumber evidence="1">7.6.2.-</ecNumber>
    </recommendedName>
</protein>
<reference key="1">
    <citation type="journal article" date="2001" name="Nature">
        <title>Complete genome sequence of a multiple drug resistant Salmonella enterica serovar Typhi CT18.</title>
        <authorList>
            <person name="Parkhill J."/>
            <person name="Dougan G."/>
            <person name="James K.D."/>
            <person name="Thomson N.R."/>
            <person name="Pickard D."/>
            <person name="Wain J."/>
            <person name="Churcher C.M."/>
            <person name="Mungall K.L."/>
            <person name="Bentley S.D."/>
            <person name="Holden M.T.G."/>
            <person name="Sebaihia M."/>
            <person name="Baker S."/>
            <person name="Basham D."/>
            <person name="Brooks K."/>
            <person name="Chillingworth T."/>
            <person name="Connerton P."/>
            <person name="Cronin A."/>
            <person name="Davis P."/>
            <person name="Davies R.M."/>
            <person name="Dowd L."/>
            <person name="White N."/>
            <person name="Farrar J."/>
            <person name="Feltwell T."/>
            <person name="Hamlin N."/>
            <person name="Haque A."/>
            <person name="Hien T.T."/>
            <person name="Holroyd S."/>
            <person name="Jagels K."/>
            <person name="Krogh A."/>
            <person name="Larsen T.S."/>
            <person name="Leather S."/>
            <person name="Moule S."/>
            <person name="O'Gaora P."/>
            <person name="Parry C."/>
            <person name="Quail M.A."/>
            <person name="Rutherford K.M."/>
            <person name="Simmonds M."/>
            <person name="Skelton J."/>
            <person name="Stevens K."/>
            <person name="Whitehead S."/>
            <person name="Barrell B.G."/>
        </authorList>
    </citation>
    <scope>NUCLEOTIDE SEQUENCE [LARGE SCALE GENOMIC DNA]</scope>
    <source>
        <strain>CT18</strain>
    </source>
</reference>
<reference key="2">
    <citation type="journal article" date="2003" name="J. Bacteriol.">
        <title>Comparative genomics of Salmonella enterica serovar Typhi strains Ty2 and CT18.</title>
        <authorList>
            <person name="Deng W."/>
            <person name="Liou S.-R."/>
            <person name="Plunkett G. III"/>
            <person name="Mayhew G.F."/>
            <person name="Rose D.J."/>
            <person name="Burland V."/>
            <person name="Kodoyianni V."/>
            <person name="Schwartz D.C."/>
            <person name="Blattner F.R."/>
        </authorList>
    </citation>
    <scope>NUCLEOTIDE SEQUENCE [LARGE SCALE GENOMIC DNA]</scope>
    <source>
        <strain>ATCC 700931 / Ty2</strain>
    </source>
</reference>